<proteinExistence type="inferred from homology"/>
<reference key="1">
    <citation type="journal article" date="2002" name="Nucleic Acids Res.">
        <title>The complete genomic sequence of Mycoplasma penetrans, an intracellular bacterial pathogen in humans.</title>
        <authorList>
            <person name="Sasaki Y."/>
            <person name="Ishikawa J."/>
            <person name="Yamashita A."/>
            <person name="Oshima K."/>
            <person name="Kenri T."/>
            <person name="Furuya K."/>
            <person name="Yoshino C."/>
            <person name="Horino A."/>
            <person name="Shiba T."/>
            <person name="Sasaki T."/>
            <person name="Hattori M."/>
        </authorList>
    </citation>
    <scope>NUCLEOTIDE SEQUENCE [LARGE SCALE GENOMIC DNA]</scope>
    <source>
        <strain>HF-2</strain>
    </source>
</reference>
<organism>
    <name type="scientific">Malacoplasma penetrans (strain HF-2)</name>
    <name type="common">Mycoplasma penetrans</name>
    <dbReference type="NCBI Taxonomy" id="272633"/>
    <lineage>
        <taxon>Bacteria</taxon>
        <taxon>Bacillati</taxon>
        <taxon>Mycoplasmatota</taxon>
        <taxon>Mycoplasmoidales</taxon>
        <taxon>Mycoplasmoidaceae</taxon>
        <taxon>Malacoplasma</taxon>
    </lineage>
</organism>
<feature type="chain" id="PRO_0000365903" description="ATP synthase subunit c">
    <location>
        <begin position="1"/>
        <end position="78"/>
    </location>
</feature>
<feature type="transmembrane region" description="Helical" evidence="1">
    <location>
        <begin position="9"/>
        <end position="29"/>
    </location>
</feature>
<feature type="transmembrane region" description="Helical" evidence="1">
    <location>
        <begin position="56"/>
        <end position="76"/>
    </location>
</feature>
<feature type="site" description="Reversibly protonated during proton transport" evidence="1">
    <location>
        <position position="60"/>
    </location>
</feature>
<keyword id="KW-0066">ATP synthesis</keyword>
<keyword id="KW-1003">Cell membrane</keyword>
<keyword id="KW-0138">CF(0)</keyword>
<keyword id="KW-0375">Hydrogen ion transport</keyword>
<keyword id="KW-0406">Ion transport</keyword>
<keyword id="KW-0446">Lipid-binding</keyword>
<keyword id="KW-0472">Membrane</keyword>
<keyword id="KW-1185">Reference proteome</keyword>
<keyword id="KW-0812">Transmembrane</keyword>
<keyword id="KW-1133">Transmembrane helix</keyword>
<keyword id="KW-0813">Transport</keyword>
<sequence>MNITNQGYAFIGAGLAMIAILGVGIGQGWSAAKSVEAVARNPEVVSKIRSQYILSAAVTETGALYCFIIAILLVFVAR</sequence>
<gene>
    <name evidence="1" type="primary">atpE</name>
    <name type="ordered locus">MYPE570</name>
</gene>
<name>ATPL_MALP2</name>
<protein>
    <recommendedName>
        <fullName evidence="1">ATP synthase subunit c</fullName>
    </recommendedName>
    <alternativeName>
        <fullName evidence="1">ATP synthase F(0) sector subunit c</fullName>
    </alternativeName>
    <alternativeName>
        <fullName evidence="1">F-type ATPase subunit c</fullName>
        <shortName evidence="1">F-ATPase subunit c</shortName>
    </alternativeName>
    <alternativeName>
        <fullName evidence="1">Lipid-binding protein</fullName>
    </alternativeName>
</protein>
<comment type="function">
    <text evidence="1">F(1)F(0) ATP synthase produces ATP from ADP in the presence of a proton or sodium gradient. F-type ATPases consist of two structural domains, F(1) containing the extramembraneous catalytic core and F(0) containing the membrane proton channel, linked together by a central stalk and a peripheral stalk. During catalysis, ATP synthesis in the catalytic domain of F(1) is coupled via a rotary mechanism of the central stalk subunits to proton translocation.</text>
</comment>
<comment type="function">
    <text evidence="1">Key component of the F(0) channel; it plays a direct role in translocation across the membrane. A homomeric c-ring of between 10-14 subunits forms the central stalk rotor element with the F(1) delta and epsilon subunits.</text>
</comment>
<comment type="subunit">
    <text evidence="1">F-type ATPases have 2 components, F(1) - the catalytic core - and F(0) - the membrane proton channel. F(1) has five subunits: alpha(3), beta(3), gamma(1), delta(1), epsilon(1). F(0) has three main subunits: a(1), b(2) and c(10-14). The alpha and beta chains form an alternating ring which encloses part of the gamma chain. F(1) is attached to F(0) by a central stalk formed by the gamma and epsilon chains, while a peripheral stalk is formed by the delta and b chains.</text>
</comment>
<comment type="subcellular location">
    <subcellularLocation>
        <location evidence="1">Cell membrane</location>
        <topology evidence="1">Multi-pass membrane protein</topology>
    </subcellularLocation>
</comment>
<comment type="similarity">
    <text evidence="1">Belongs to the ATPase C chain family.</text>
</comment>
<evidence type="ECO:0000255" key="1">
    <source>
        <dbReference type="HAMAP-Rule" id="MF_01396"/>
    </source>
</evidence>
<accession>Q8EWZ3</accession>
<dbReference type="EMBL" id="BA000026">
    <property type="protein sequence ID" value="BAC43847.1"/>
    <property type="molecule type" value="Genomic_DNA"/>
</dbReference>
<dbReference type="RefSeq" id="WP_011076883.1">
    <property type="nucleotide sequence ID" value="NC_004432.1"/>
</dbReference>
<dbReference type="SMR" id="Q8EWZ3"/>
<dbReference type="FunCoup" id="Q8EWZ3">
    <property type="interactions" value="194"/>
</dbReference>
<dbReference type="STRING" id="272633.gene:10731148"/>
<dbReference type="KEGG" id="mpe:MYPE570"/>
<dbReference type="eggNOG" id="COG0636">
    <property type="taxonomic scope" value="Bacteria"/>
</dbReference>
<dbReference type="HOGENOM" id="CLU_148047_2_0_14"/>
<dbReference type="InParanoid" id="Q8EWZ3"/>
<dbReference type="Proteomes" id="UP000002522">
    <property type="component" value="Chromosome"/>
</dbReference>
<dbReference type="GO" id="GO:0005886">
    <property type="term" value="C:plasma membrane"/>
    <property type="evidence" value="ECO:0007669"/>
    <property type="project" value="UniProtKB-SubCell"/>
</dbReference>
<dbReference type="GO" id="GO:0045259">
    <property type="term" value="C:proton-transporting ATP synthase complex"/>
    <property type="evidence" value="ECO:0007669"/>
    <property type="project" value="UniProtKB-KW"/>
</dbReference>
<dbReference type="GO" id="GO:0033177">
    <property type="term" value="C:proton-transporting two-sector ATPase complex, proton-transporting domain"/>
    <property type="evidence" value="ECO:0007669"/>
    <property type="project" value="InterPro"/>
</dbReference>
<dbReference type="GO" id="GO:0008289">
    <property type="term" value="F:lipid binding"/>
    <property type="evidence" value="ECO:0007669"/>
    <property type="project" value="UniProtKB-KW"/>
</dbReference>
<dbReference type="GO" id="GO:0046933">
    <property type="term" value="F:proton-transporting ATP synthase activity, rotational mechanism"/>
    <property type="evidence" value="ECO:0007669"/>
    <property type="project" value="UniProtKB-UniRule"/>
</dbReference>
<dbReference type="CDD" id="cd18184">
    <property type="entry name" value="ATP-synt_Fo_c_NaATPase"/>
    <property type="match status" value="1"/>
</dbReference>
<dbReference type="Gene3D" id="1.20.120.610">
    <property type="entry name" value="lithium bound rotor ring of v- atpase"/>
    <property type="match status" value="1"/>
</dbReference>
<dbReference type="HAMAP" id="MF_01396">
    <property type="entry name" value="ATP_synth_c_bact"/>
    <property type="match status" value="1"/>
</dbReference>
<dbReference type="InterPro" id="IPR005953">
    <property type="entry name" value="ATP_synth_csu_bac/chlpt"/>
</dbReference>
<dbReference type="InterPro" id="IPR000454">
    <property type="entry name" value="ATP_synth_F0_csu"/>
</dbReference>
<dbReference type="InterPro" id="IPR020537">
    <property type="entry name" value="ATP_synth_F0_csu_DDCD_BS"/>
</dbReference>
<dbReference type="InterPro" id="IPR002379">
    <property type="entry name" value="ATPase_proteolipid_c-like_dom"/>
</dbReference>
<dbReference type="InterPro" id="IPR035921">
    <property type="entry name" value="F/V-ATP_Csub_sf"/>
</dbReference>
<dbReference type="NCBIfam" id="TIGR01260">
    <property type="entry name" value="ATP_synt_c"/>
    <property type="match status" value="1"/>
</dbReference>
<dbReference type="PANTHER" id="PTHR10031">
    <property type="entry name" value="ATP SYNTHASE LIPID-BINDING PROTEIN, MITOCHONDRIAL"/>
    <property type="match status" value="1"/>
</dbReference>
<dbReference type="PANTHER" id="PTHR10031:SF0">
    <property type="entry name" value="ATPASE PROTEIN 9"/>
    <property type="match status" value="1"/>
</dbReference>
<dbReference type="Pfam" id="PF00137">
    <property type="entry name" value="ATP-synt_C"/>
    <property type="match status" value="1"/>
</dbReference>
<dbReference type="PRINTS" id="PR00124">
    <property type="entry name" value="ATPASEC"/>
</dbReference>
<dbReference type="SUPFAM" id="SSF81333">
    <property type="entry name" value="F1F0 ATP synthase subunit C"/>
    <property type="match status" value="1"/>
</dbReference>
<dbReference type="PROSITE" id="PS00605">
    <property type="entry name" value="ATPASE_C"/>
    <property type="match status" value="1"/>
</dbReference>